<accession>A9M3W3</accession>
<dbReference type="EMBL" id="CP000381">
    <property type="protein sequence ID" value="ABX74125.1"/>
    <property type="molecule type" value="Genomic_DNA"/>
</dbReference>
<dbReference type="RefSeq" id="WP_012222131.1">
    <property type="nucleotide sequence ID" value="NC_010120.1"/>
</dbReference>
<dbReference type="SMR" id="A9M3W3"/>
<dbReference type="KEGG" id="nmn:NMCC_2002"/>
<dbReference type="HOGENOM" id="CLU_036235_2_1_4"/>
<dbReference type="Proteomes" id="UP000001177">
    <property type="component" value="Chromosome"/>
</dbReference>
<dbReference type="GO" id="GO:0015934">
    <property type="term" value="C:large ribosomal subunit"/>
    <property type="evidence" value="ECO:0007669"/>
    <property type="project" value="InterPro"/>
</dbReference>
<dbReference type="GO" id="GO:0019843">
    <property type="term" value="F:rRNA binding"/>
    <property type="evidence" value="ECO:0007669"/>
    <property type="project" value="UniProtKB-UniRule"/>
</dbReference>
<dbReference type="GO" id="GO:0003735">
    <property type="term" value="F:structural constituent of ribosome"/>
    <property type="evidence" value="ECO:0007669"/>
    <property type="project" value="InterPro"/>
</dbReference>
<dbReference type="GO" id="GO:0016740">
    <property type="term" value="F:transferase activity"/>
    <property type="evidence" value="ECO:0007669"/>
    <property type="project" value="InterPro"/>
</dbReference>
<dbReference type="GO" id="GO:0002181">
    <property type="term" value="P:cytoplasmic translation"/>
    <property type="evidence" value="ECO:0007669"/>
    <property type="project" value="TreeGrafter"/>
</dbReference>
<dbReference type="FunFam" id="2.30.30.30:FF:000001">
    <property type="entry name" value="50S ribosomal protein L2"/>
    <property type="match status" value="1"/>
</dbReference>
<dbReference type="FunFam" id="2.40.50.140:FF:000003">
    <property type="entry name" value="50S ribosomal protein L2"/>
    <property type="match status" value="1"/>
</dbReference>
<dbReference type="FunFam" id="4.10.950.10:FF:000001">
    <property type="entry name" value="50S ribosomal protein L2"/>
    <property type="match status" value="1"/>
</dbReference>
<dbReference type="Gene3D" id="2.30.30.30">
    <property type="match status" value="1"/>
</dbReference>
<dbReference type="Gene3D" id="2.40.50.140">
    <property type="entry name" value="Nucleic acid-binding proteins"/>
    <property type="match status" value="1"/>
</dbReference>
<dbReference type="Gene3D" id="4.10.950.10">
    <property type="entry name" value="Ribosomal protein L2, domain 3"/>
    <property type="match status" value="1"/>
</dbReference>
<dbReference type="HAMAP" id="MF_01320_B">
    <property type="entry name" value="Ribosomal_uL2_B"/>
    <property type="match status" value="1"/>
</dbReference>
<dbReference type="InterPro" id="IPR012340">
    <property type="entry name" value="NA-bd_OB-fold"/>
</dbReference>
<dbReference type="InterPro" id="IPR014722">
    <property type="entry name" value="Rib_uL2_dom2"/>
</dbReference>
<dbReference type="InterPro" id="IPR002171">
    <property type="entry name" value="Ribosomal_uL2"/>
</dbReference>
<dbReference type="InterPro" id="IPR005880">
    <property type="entry name" value="Ribosomal_uL2_bac/org-type"/>
</dbReference>
<dbReference type="InterPro" id="IPR022669">
    <property type="entry name" value="Ribosomal_uL2_C"/>
</dbReference>
<dbReference type="InterPro" id="IPR022671">
    <property type="entry name" value="Ribosomal_uL2_CS"/>
</dbReference>
<dbReference type="InterPro" id="IPR014726">
    <property type="entry name" value="Ribosomal_uL2_dom3"/>
</dbReference>
<dbReference type="InterPro" id="IPR022666">
    <property type="entry name" value="Ribosomal_uL2_RNA-bd_dom"/>
</dbReference>
<dbReference type="InterPro" id="IPR008991">
    <property type="entry name" value="Translation_prot_SH3-like_sf"/>
</dbReference>
<dbReference type="NCBIfam" id="TIGR01171">
    <property type="entry name" value="rplB_bact"/>
    <property type="match status" value="1"/>
</dbReference>
<dbReference type="PANTHER" id="PTHR13691:SF5">
    <property type="entry name" value="LARGE RIBOSOMAL SUBUNIT PROTEIN UL2M"/>
    <property type="match status" value="1"/>
</dbReference>
<dbReference type="PANTHER" id="PTHR13691">
    <property type="entry name" value="RIBOSOMAL PROTEIN L2"/>
    <property type="match status" value="1"/>
</dbReference>
<dbReference type="Pfam" id="PF00181">
    <property type="entry name" value="Ribosomal_L2"/>
    <property type="match status" value="1"/>
</dbReference>
<dbReference type="Pfam" id="PF03947">
    <property type="entry name" value="Ribosomal_L2_C"/>
    <property type="match status" value="1"/>
</dbReference>
<dbReference type="PIRSF" id="PIRSF002158">
    <property type="entry name" value="Ribosomal_L2"/>
    <property type="match status" value="1"/>
</dbReference>
<dbReference type="SMART" id="SM01383">
    <property type="entry name" value="Ribosomal_L2"/>
    <property type="match status" value="1"/>
</dbReference>
<dbReference type="SMART" id="SM01382">
    <property type="entry name" value="Ribosomal_L2_C"/>
    <property type="match status" value="1"/>
</dbReference>
<dbReference type="SUPFAM" id="SSF50249">
    <property type="entry name" value="Nucleic acid-binding proteins"/>
    <property type="match status" value="1"/>
</dbReference>
<dbReference type="SUPFAM" id="SSF50104">
    <property type="entry name" value="Translation proteins SH3-like domain"/>
    <property type="match status" value="1"/>
</dbReference>
<dbReference type="PROSITE" id="PS00467">
    <property type="entry name" value="RIBOSOMAL_L2"/>
    <property type="match status" value="1"/>
</dbReference>
<sequence>MAIVKMKPTSAGRRGMVRVVTEGLHKGAPYAPLLEKKNSTAGRNSNGHITTRHKGGGHKHHYRVVDFKRNKDGIPAKVERIEYDPNRTAFIALLCYADGERRYIIAPRGIQAGAVLVSGAEAAIKVGNTLPIRNIPVGTTIHCIEMKPGKGAQIARSAGASAVLLAKEAAYAQVRLRSGEVRKINVNCRATIGEVGNEEQSLKKIGKAGANRWRGIRPTVRGVVMNPVDHPHGGGEGRTGEAREPVSPWGTPAKGYRTRNNKRTDNMIVRRRYSNKG</sequence>
<reference key="1">
    <citation type="journal article" date="2008" name="Genomics">
        <title>Characterization of ST-4821 complex, a unique Neisseria meningitidis clone.</title>
        <authorList>
            <person name="Peng J."/>
            <person name="Yang L."/>
            <person name="Yang F."/>
            <person name="Yang J."/>
            <person name="Yan Y."/>
            <person name="Nie H."/>
            <person name="Zhang X."/>
            <person name="Xiong Z."/>
            <person name="Jiang Y."/>
            <person name="Cheng F."/>
            <person name="Xu X."/>
            <person name="Chen S."/>
            <person name="Sun L."/>
            <person name="Li W."/>
            <person name="Shen Y."/>
            <person name="Shao Z."/>
            <person name="Liang X."/>
            <person name="Xu J."/>
            <person name="Jin Q."/>
        </authorList>
    </citation>
    <scope>NUCLEOTIDE SEQUENCE [LARGE SCALE GENOMIC DNA]</scope>
    <source>
        <strain>053442</strain>
    </source>
</reference>
<name>RL2_NEIM0</name>
<proteinExistence type="inferred from homology"/>
<gene>
    <name evidence="1" type="primary">rplB</name>
    <name type="ordered locus">NMCC_2002</name>
</gene>
<protein>
    <recommendedName>
        <fullName evidence="1">Large ribosomal subunit protein uL2</fullName>
    </recommendedName>
    <alternativeName>
        <fullName evidence="3">50S ribosomal protein L2</fullName>
    </alternativeName>
</protein>
<keyword id="KW-0687">Ribonucleoprotein</keyword>
<keyword id="KW-0689">Ribosomal protein</keyword>
<keyword id="KW-0694">RNA-binding</keyword>
<keyword id="KW-0699">rRNA-binding</keyword>
<comment type="function">
    <text evidence="1">One of the primary rRNA binding proteins. Required for association of the 30S and 50S subunits to form the 70S ribosome, for tRNA binding and peptide bond formation. It has been suggested to have peptidyltransferase activity; this is somewhat controversial. Makes several contacts with the 16S rRNA in the 70S ribosome.</text>
</comment>
<comment type="subunit">
    <text evidence="1">Part of the 50S ribosomal subunit. Forms a bridge to the 30S subunit in the 70S ribosome.</text>
</comment>
<comment type="similarity">
    <text evidence="1">Belongs to the universal ribosomal protein uL2 family.</text>
</comment>
<organism>
    <name type="scientific">Neisseria meningitidis serogroup C (strain 053442)</name>
    <dbReference type="NCBI Taxonomy" id="374833"/>
    <lineage>
        <taxon>Bacteria</taxon>
        <taxon>Pseudomonadati</taxon>
        <taxon>Pseudomonadota</taxon>
        <taxon>Betaproteobacteria</taxon>
        <taxon>Neisseriales</taxon>
        <taxon>Neisseriaceae</taxon>
        <taxon>Neisseria</taxon>
    </lineage>
</organism>
<evidence type="ECO:0000255" key="1">
    <source>
        <dbReference type="HAMAP-Rule" id="MF_01320"/>
    </source>
</evidence>
<evidence type="ECO:0000256" key="2">
    <source>
        <dbReference type="SAM" id="MobiDB-lite"/>
    </source>
</evidence>
<evidence type="ECO:0000305" key="3"/>
<feature type="chain" id="PRO_1000086339" description="Large ribosomal subunit protein uL2">
    <location>
        <begin position="1"/>
        <end position="277"/>
    </location>
</feature>
<feature type="region of interest" description="Disordered" evidence="2">
    <location>
        <begin position="37"/>
        <end position="60"/>
    </location>
</feature>
<feature type="region of interest" description="Disordered" evidence="2">
    <location>
        <begin position="223"/>
        <end position="265"/>
    </location>
</feature>
<feature type="compositionally biased region" description="Polar residues" evidence="2">
    <location>
        <begin position="39"/>
        <end position="49"/>
    </location>
</feature>
<feature type="compositionally biased region" description="Basic residues" evidence="2">
    <location>
        <begin position="50"/>
        <end position="60"/>
    </location>
</feature>
<feature type="compositionally biased region" description="Basic and acidic residues" evidence="2">
    <location>
        <begin position="229"/>
        <end position="244"/>
    </location>
</feature>